<comment type="function">
    <text evidence="1">Binds directly to 23S ribosomal RNA and is necessary for the in vitro assembly process of the 50S ribosomal subunit. It is not involved in the protein synthesizing functions of that subunit.</text>
</comment>
<comment type="similarity">
    <text evidence="1">Belongs to the bacterial ribosomal protein bL20 family.</text>
</comment>
<proteinExistence type="inferred from homology"/>
<name>RL20_HISS1</name>
<protein>
    <recommendedName>
        <fullName evidence="1">Large ribosomal subunit protein bL20</fullName>
    </recommendedName>
    <alternativeName>
        <fullName evidence="2">50S ribosomal protein L20</fullName>
    </alternativeName>
</protein>
<organism>
    <name type="scientific">Histophilus somni (strain 129Pt)</name>
    <name type="common">Haemophilus somnus</name>
    <dbReference type="NCBI Taxonomy" id="205914"/>
    <lineage>
        <taxon>Bacteria</taxon>
        <taxon>Pseudomonadati</taxon>
        <taxon>Pseudomonadota</taxon>
        <taxon>Gammaproteobacteria</taxon>
        <taxon>Pasteurellales</taxon>
        <taxon>Pasteurellaceae</taxon>
        <taxon>Histophilus</taxon>
    </lineage>
</organism>
<gene>
    <name evidence="1" type="primary">rplT</name>
    <name type="ordered locus">HS_0875</name>
</gene>
<sequence length="117" mass="13401">MARVKRGVIARARHKKVLKAAKGYYGARSRVYRVAFQAVIKAGQYAYRDRRQRKRQFRQLWIARINAATRQNGLSYSKFINGLKKASVEIDRKILADIAVFDKVAFTALVEKAKSAL</sequence>
<accession>Q0I3J1</accession>
<reference key="1">
    <citation type="journal article" date="2007" name="J. Bacteriol.">
        <title>Complete genome sequence of Haemophilus somnus (Histophilus somni) strain 129Pt and comparison to Haemophilus ducreyi 35000HP and Haemophilus influenzae Rd.</title>
        <authorList>
            <person name="Challacombe J.F."/>
            <person name="Duncan A.J."/>
            <person name="Brettin T.S."/>
            <person name="Bruce D."/>
            <person name="Chertkov O."/>
            <person name="Detter J.C."/>
            <person name="Han C.S."/>
            <person name="Misra M."/>
            <person name="Richardson P."/>
            <person name="Tapia R."/>
            <person name="Thayer N."/>
            <person name="Xie G."/>
            <person name="Inzana T.J."/>
        </authorList>
    </citation>
    <scope>NUCLEOTIDE SEQUENCE [LARGE SCALE GENOMIC DNA]</scope>
    <source>
        <strain>129Pt</strain>
    </source>
</reference>
<feature type="chain" id="PRO_1000048989" description="Large ribosomal subunit protein bL20">
    <location>
        <begin position="1"/>
        <end position="117"/>
    </location>
</feature>
<keyword id="KW-0687">Ribonucleoprotein</keyword>
<keyword id="KW-0689">Ribosomal protein</keyword>
<keyword id="KW-0694">RNA-binding</keyword>
<keyword id="KW-0699">rRNA-binding</keyword>
<evidence type="ECO:0000255" key="1">
    <source>
        <dbReference type="HAMAP-Rule" id="MF_00382"/>
    </source>
</evidence>
<evidence type="ECO:0000305" key="2"/>
<dbReference type="EMBL" id="CP000436">
    <property type="protein sequence ID" value="ABI25150.1"/>
    <property type="molecule type" value="Genomic_DNA"/>
</dbReference>
<dbReference type="SMR" id="Q0I3J1"/>
<dbReference type="KEGG" id="hso:HS_0875"/>
<dbReference type="eggNOG" id="COG0292">
    <property type="taxonomic scope" value="Bacteria"/>
</dbReference>
<dbReference type="HOGENOM" id="CLU_123265_0_1_6"/>
<dbReference type="GO" id="GO:1990904">
    <property type="term" value="C:ribonucleoprotein complex"/>
    <property type="evidence" value="ECO:0007669"/>
    <property type="project" value="UniProtKB-KW"/>
</dbReference>
<dbReference type="GO" id="GO:0005840">
    <property type="term" value="C:ribosome"/>
    <property type="evidence" value="ECO:0007669"/>
    <property type="project" value="UniProtKB-KW"/>
</dbReference>
<dbReference type="GO" id="GO:0019843">
    <property type="term" value="F:rRNA binding"/>
    <property type="evidence" value="ECO:0007669"/>
    <property type="project" value="UniProtKB-UniRule"/>
</dbReference>
<dbReference type="GO" id="GO:0003735">
    <property type="term" value="F:structural constituent of ribosome"/>
    <property type="evidence" value="ECO:0007669"/>
    <property type="project" value="InterPro"/>
</dbReference>
<dbReference type="GO" id="GO:0000027">
    <property type="term" value="P:ribosomal large subunit assembly"/>
    <property type="evidence" value="ECO:0007669"/>
    <property type="project" value="UniProtKB-UniRule"/>
</dbReference>
<dbReference type="GO" id="GO:0006412">
    <property type="term" value="P:translation"/>
    <property type="evidence" value="ECO:0007669"/>
    <property type="project" value="InterPro"/>
</dbReference>
<dbReference type="CDD" id="cd07026">
    <property type="entry name" value="Ribosomal_L20"/>
    <property type="match status" value="1"/>
</dbReference>
<dbReference type="FunFam" id="1.10.1900.20:FF:000001">
    <property type="entry name" value="50S ribosomal protein L20"/>
    <property type="match status" value="1"/>
</dbReference>
<dbReference type="Gene3D" id="6.10.160.10">
    <property type="match status" value="1"/>
</dbReference>
<dbReference type="Gene3D" id="1.10.1900.20">
    <property type="entry name" value="Ribosomal protein L20"/>
    <property type="match status" value="1"/>
</dbReference>
<dbReference type="HAMAP" id="MF_00382">
    <property type="entry name" value="Ribosomal_bL20"/>
    <property type="match status" value="1"/>
</dbReference>
<dbReference type="InterPro" id="IPR005813">
    <property type="entry name" value="Ribosomal_bL20"/>
</dbReference>
<dbReference type="InterPro" id="IPR049946">
    <property type="entry name" value="RIBOSOMAL_L20_CS"/>
</dbReference>
<dbReference type="InterPro" id="IPR035566">
    <property type="entry name" value="Ribosomal_protein_bL20_C"/>
</dbReference>
<dbReference type="NCBIfam" id="TIGR01032">
    <property type="entry name" value="rplT_bact"/>
    <property type="match status" value="1"/>
</dbReference>
<dbReference type="PANTHER" id="PTHR10986">
    <property type="entry name" value="39S RIBOSOMAL PROTEIN L20"/>
    <property type="match status" value="1"/>
</dbReference>
<dbReference type="Pfam" id="PF00453">
    <property type="entry name" value="Ribosomal_L20"/>
    <property type="match status" value="1"/>
</dbReference>
<dbReference type="PRINTS" id="PR00062">
    <property type="entry name" value="RIBOSOMALL20"/>
</dbReference>
<dbReference type="SUPFAM" id="SSF74731">
    <property type="entry name" value="Ribosomal protein L20"/>
    <property type="match status" value="1"/>
</dbReference>
<dbReference type="PROSITE" id="PS00937">
    <property type="entry name" value="RIBOSOMAL_L20"/>
    <property type="match status" value="1"/>
</dbReference>